<organism>
    <name type="scientific">Arabidopsis thaliana</name>
    <name type="common">Mouse-ear cress</name>
    <dbReference type="NCBI Taxonomy" id="3702"/>
    <lineage>
        <taxon>Eukaryota</taxon>
        <taxon>Viridiplantae</taxon>
        <taxon>Streptophyta</taxon>
        <taxon>Embryophyta</taxon>
        <taxon>Tracheophyta</taxon>
        <taxon>Spermatophyta</taxon>
        <taxon>Magnoliopsida</taxon>
        <taxon>eudicotyledons</taxon>
        <taxon>Gunneridae</taxon>
        <taxon>Pentapetalae</taxon>
        <taxon>rosids</taxon>
        <taxon>malvids</taxon>
        <taxon>Brassicales</taxon>
        <taxon>Brassicaceae</taxon>
        <taxon>Camelineae</taxon>
        <taxon>Arabidopsis</taxon>
    </lineage>
</organism>
<gene>
    <name type="primary">AMC2</name>
    <name type="synonym">MCP1C</name>
    <name type="ordered locus">At4g25110</name>
    <name type="ORF">F13M23.250</name>
</gene>
<keyword id="KW-0025">Alternative splicing</keyword>
<keyword id="KW-0378">Hydrolase</keyword>
<keyword id="KW-0611">Plant defense</keyword>
<keyword id="KW-0645">Protease</keyword>
<keyword id="KW-1185">Reference proteome</keyword>
<keyword id="KW-0788">Thiol protease</keyword>
<dbReference type="EC" id="3.4.22.-"/>
<dbReference type="EMBL" id="AY219827">
    <property type="protein sequence ID" value="AAP44515.1"/>
    <property type="molecule type" value="mRNA"/>
</dbReference>
<dbReference type="EMBL" id="AY322526">
    <property type="protein sequence ID" value="AAP84707.1"/>
    <property type="molecule type" value="mRNA"/>
</dbReference>
<dbReference type="EMBL" id="AL035523">
    <property type="protein sequence ID" value="CAB36753.1"/>
    <property type="status" value="ALT_SEQ"/>
    <property type="molecule type" value="Genomic_DNA"/>
</dbReference>
<dbReference type="EMBL" id="AL161562">
    <property type="protein sequence ID" value="CAB79420.1"/>
    <property type="status" value="ALT_SEQ"/>
    <property type="molecule type" value="Genomic_DNA"/>
</dbReference>
<dbReference type="EMBL" id="CP002687">
    <property type="protein sequence ID" value="AEE85012.1"/>
    <property type="molecule type" value="Genomic_DNA"/>
</dbReference>
<dbReference type="EMBL" id="CP002687">
    <property type="protein sequence ID" value="AEE85013.1"/>
    <property type="molecule type" value="Genomic_DNA"/>
</dbReference>
<dbReference type="EMBL" id="BT026456">
    <property type="protein sequence ID" value="ABH04563.1"/>
    <property type="molecule type" value="mRNA"/>
</dbReference>
<dbReference type="EMBL" id="AK175293">
    <property type="protein sequence ID" value="BAD43056.1"/>
    <property type="molecule type" value="mRNA"/>
</dbReference>
<dbReference type="EMBL" id="AK221790">
    <property type="protein sequence ID" value="BAD93928.1"/>
    <property type="molecule type" value="mRNA"/>
</dbReference>
<dbReference type="PIR" id="T05532">
    <property type="entry name" value="T05532"/>
</dbReference>
<dbReference type="RefSeq" id="NP_001031711.1">
    <molecule id="Q7XJE5-2"/>
    <property type="nucleotide sequence ID" value="NM_001036634.1"/>
</dbReference>
<dbReference type="RefSeq" id="NP_194241.3">
    <molecule id="Q7XJE5-1"/>
    <property type="nucleotide sequence ID" value="NM_118643.5"/>
</dbReference>
<dbReference type="SMR" id="Q7XJE5"/>
<dbReference type="FunCoup" id="Q7XJE5">
    <property type="interactions" value="146"/>
</dbReference>
<dbReference type="IntAct" id="Q7XJE5">
    <property type="interactions" value="2"/>
</dbReference>
<dbReference type="STRING" id="3702.Q7XJE5"/>
<dbReference type="MEROPS" id="C14.A04"/>
<dbReference type="GlyGen" id="Q7XJE5">
    <property type="glycosylation" value="1 site"/>
</dbReference>
<dbReference type="PaxDb" id="3702-AT4G25110.1"/>
<dbReference type="ProteomicsDB" id="238848">
    <molecule id="Q7XJE5-1"/>
</dbReference>
<dbReference type="EnsemblPlants" id="AT4G25110.1">
    <molecule id="Q7XJE5-1"/>
    <property type="protein sequence ID" value="AT4G25110.1"/>
    <property type="gene ID" value="AT4G25110"/>
</dbReference>
<dbReference type="EnsemblPlants" id="AT4G25110.2">
    <molecule id="Q7XJE5-2"/>
    <property type="protein sequence ID" value="AT4G25110.2"/>
    <property type="gene ID" value="AT4G25110"/>
</dbReference>
<dbReference type="GeneID" id="828614"/>
<dbReference type="Gramene" id="AT4G25110.1">
    <molecule id="Q7XJE5-1"/>
    <property type="protein sequence ID" value="AT4G25110.1"/>
    <property type="gene ID" value="AT4G25110"/>
</dbReference>
<dbReference type="Gramene" id="AT4G25110.2">
    <molecule id="Q7XJE5-2"/>
    <property type="protein sequence ID" value="AT4G25110.2"/>
    <property type="gene ID" value="AT4G25110"/>
</dbReference>
<dbReference type="KEGG" id="ath:AT4G25110"/>
<dbReference type="Araport" id="AT4G25110"/>
<dbReference type="TAIR" id="AT4G25110">
    <property type="gene designation" value="MC2"/>
</dbReference>
<dbReference type="eggNOG" id="KOG1546">
    <property type="taxonomic scope" value="Eukaryota"/>
</dbReference>
<dbReference type="HOGENOM" id="CLU_029389_2_4_1"/>
<dbReference type="InParanoid" id="Q7XJE5"/>
<dbReference type="OMA" id="YLCRMER"/>
<dbReference type="OrthoDB" id="3223806at2759"/>
<dbReference type="PhylomeDB" id="Q7XJE5"/>
<dbReference type="PRO" id="PR:Q7XJE5"/>
<dbReference type="Proteomes" id="UP000006548">
    <property type="component" value="Chromosome 4"/>
</dbReference>
<dbReference type="ExpressionAtlas" id="Q7XJE5">
    <property type="expression patterns" value="baseline and differential"/>
</dbReference>
<dbReference type="GO" id="GO:0004197">
    <property type="term" value="F:cysteine-type endopeptidase activity"/>
    <property type="evidence" value="ECO:0007669"/>
    <property type="project" value="InterPro"/>
</dbReference>
<dbReference type="GO" id="GO:0006952">
    <property type="term" value="P:defense response"/>
    <property type="evidence" value="ECO:0007669"/>
    <property type="project" value="UniProtKB-KW"/>
</dbReference>
<dbReference type="GO" id="GO:0043069">
    <property type="term" value="P:negative regulation of programmed cell death"/>
    <property type="evidence" value="ECO:0000316"/>
    <property type="project" value="TAIR"/>
</dbReference>
<dbReference type="GO" id="GO:0006508">
    <property type="term" value="P:proteolysis"/>
    <property type="evidence" value="ECO:0007669"/>
    <property type="project" value="UniProtKB-KW"/>
</dbReference>
<dbReference type="FunFam" id="3.40.50.12660:FF:000009">
    <property type="entry name" value="Metacaspase-2"/>
    <property type="match status" value="1"/>
</dbReference>
<dbReference type="Gene3D" id="3.40.50.12660">
    <property type="match status" value="1"/>
</dbReference>
<dbReference type="InterPro" id="IPR050452">
    <property type="entry name" value="Metacaspase"/>
</dbReference>
<dbReference type="InterPro" id="IPR011600">
    <property type="entry name" value="Pept_C14_caspase"/>
</dbReference>
<dbReference type="InterPro" id="IPR005735">
    <property type="entry name" value="Znf_LSD1"/>
</dbReference>
<dbReference type="NCBIfam" id="TIGR01053">
    <property type="entry name" value="LSD1"/>
    <property type="match status" value="1"/>
</dbReference>
<dbReference type="PANTHER" id="PTHR48104:SF45">
    <property type="entry name" value="METACASPASE-2"/>
    <property type="match status" value="1"/>
</dbReference>
<dbReference type="PANTHER" id="PTHR48104">
    <property type="entry name" value="METACASPASE-4"/>
    <property type="match status" value="1"/>
</dbReference>
<dbReference type="Pfam" id="PF00656">
    <property type="entry name" value="Peptidase_C14"/>
    <property type="match status" value="1"/>
</dbReference>
<dbReference type="Pfam" id="PF06943">
    <property type="entry name" value="zf-LSD1"/>
    <property type="match status" value="1"/>
</dbReference>
<reference key="1">
    <citation type="journal article" date="2004" name="J. Biol. Chem.">
        <title>Type II metacaspases Atmc4 and Atmc9 of Arabidopsis thaliana cleave substrates after arginine and lysine.</title>
        <authorList>
            <person name="Vercammen D."/>
            <person name="van de Cotte B."/>
            <person name="De Jaeger G."/>
            <person name="Eeckhout D."/>
            <person name="Casteels P."/>
            <person name="Vandepoele K."/>
            <person name="Vandenberghe I."/>
            <person name="van Beeumen J."/>
            <person name="Inze D."/>
            <person name="van Breusegem F."/>
        </authorList>
    </citation>
    <scope>NUCLEOTIDE SEQUENCE [MRNA] (ISOFORM 1)</scope>
    <scope>GENE FAMILY</scope>
    <scope>NOMENCLATURE</scope>
</reference>
<reference key="2">
    <citation type="submission" date="2003-06" db="EMBL/GenBank/DDBJ databases">
        <title>Characterization of metacaspases.</title>
        <authorList>
            <person name="Ikeda Y."/>
            <person name="Krishnamurthy N."/>
            <person name="Chua N.-H."/>
        </authorList>
    </citation>
    <scope>NUCLEOTIDE SEQUENCE [MRNA] (ISOFORM 1)</scope>
</reference>
<reference key="3">
    <citation type="journal article" date="1999" name="Nature">
        <title>Sequence and analysis of chromosome 4 of the plant Arabidopsis thaliana.</title>
        <authorList>
            <person name="Mayer K.F.X."/>
            <person name="Schueller C."/>
            <person name="Wambutt R."/>
            <person name="Murphy G."/>
            <person name="Volckaert G."/>
            <person name="Pohl T."/>
            <person name="Duesterhoeft A."/>
            <person name="Stiekema W."/>
            <person name="Entian K.-D."/>
            <person name="Terryn N."/>
            <person name="Harris B."/>
            <person name="Ansorge W."/>
            <person name="Brandt P."/>
            <person name="Grivell L.A."/>
            <person name="Rieger M."/>
            <person name="Weichselgartner M."/>
            <person name="de Simone V."/>
            <person name="Obermaier B."/>
            <person name="Mache R."/>
            <person name="Mueller M."/>
            <person name="Kreis M."/>
            <person name="Delseny M."/>
            <person name="Puigdomenech P."/>
            <person name="Watson M."/>
            <person name="Schmidtheini T."/>
            <person name="Reichert B."/>
            <person name="Portetelle D."/>
            <person name="Perez-Alonso M."/>
            <person name="Boutry M."/>
            <person name="Bancroft I."/>
            <person name="Vos P."/>
            <person name="Hoheisel J."/>
            <person name="Zimmermann W."/>
            <person name="Wedler H."/>
            <person name="Ridley P."/>
            <person name="Langham S.-A."/>
            <person name="McCullagh B."/>
            <person name="Bilham L."/>
            <person name="Robben J."/>
            <person name="van der Schueren J."/>
            <person name="Grymonprez B."/>
            <person name="Chuang Y.-J."/>
            <person name="Vandenbussche F."/>
            <person name="Braeken M."/>
            <person name="Weltjens I."/>
            <person name="Voet M."/>
            <person name="Bastiaens I."/>
            <person name="Aert R."/>
            <person name="Defoor E."/>
            <person name="Weitzenegger T."/>
            <person name="Bothe G."/>
            <person name="Ramsperger U."/>
            <person name="Hilbert H."/>
            <person name="Braun M."/>
            <person name="Holzer E."/>
            <person name="Brandt A."/>
            <person name="Peters S."/>
            <person name="van Staveren M."/>
            <person name="Dirkse W."/>
            <person name="Mooijman P."/>
            <person name="Klein Lankhorst R."/>
            <person name="Rose M."/>
            <person name="Hauf J."/>
            <person name="Koetter P."/>
            <person name="Berneiser S."/>
            <person name="Hempel S."/>
            <person name="Feldpausch M."/>
            <person name="Lamberth S."/>
            <person name="Van den Daele H."/>
            <person name="De Keyser A."/>
            <person name="Buysshaert C."/>
            <person name="Gielen J."/>
            <person name="Villarroel R."/>
            <person name="De Clercq R."/>
            <person name="van Montagu M."/>
            <person name="Rogers J."/>
            <person name="Cronin A."/>
            <person name="Quail M.A."/>
            <person name="Bray-Allen S."/>
            <person name="Clark L."/>
            <person name="Doggett J."/>
            <person name="Hall S."/>
            <person name="Kay M."/>
            <person name="Lennard N."/>
            <person name="McLay K."/>
            <person name="Mayes R."/>
            <person name="Pettett A."/>
            <person name="Rajandream M.A."/>
            <person name="Lyne M."/>
            <person name="Benes V."/>
            <person name="Rechmann S."/>
            <person name="Borkova D."/>
            <person name="Bloecker H."/>
            <person name="Scharfe M."/>
            <person name="Grimm M."/>
            <person name="Loehnert T.-H."/>
            <person name="Dose S."/>
            <person name="de Haan M."/>
            <person name="Maarse A.C."/>
            <person name="Schaefer M."/>
            <person name="Mueller-Auer S."/>
            <person name="Gabel C."/>
            <person name="Fuchs M."/>
            <person name="Fartmann B."/>
            <person name="Granderath K."/>
            <person name="Dauner D."/>
            <person name="Herzl A."/>
            <person name="Neumann S."/>
            <person name="Argiriou A."/>
            <person name="Vitale D."/>
            <person name="Liguori R."/>
            <person name="Piravandi E."/>
            <person name="Massenet O."/>
            <person name="Quigley F."/>
            <person name="Clabauld G."/>
            <person name="Muendlein A."/>
            <person name="Felber R."/>
            <person name="Schnabl S."/>
            <person name="Hiller R."/>
            <person name="Schmidt W."/>
            <person name="Lecharny A."/>
            <person name="Aubourg S."/>
            <person name="Chefdor F."/>
            <person name="Cooke R."/>
            <person name="Berger C."/>
            <person name="Monfort A."/>
            <person name="Casacuberta E."/>
            <person name="Gibbons T."/>
            <person name="Weber N."/>
            <person name="Vandenbol M."/>
            <person name="Bargues M."/>
            <person name="Terol J."/>
            <person name="Torres A."/>
            <person name="Perez-Perez A."/>
            <person name="Purnelle B."/>
            <person name="Bent E."/>
            <person name="Johnson S."/>
            <person name="Tacon D."/>
            <person name="Jesse T."/>
            <person name="Heijnen L."/>
            <person name="Schwarz S."/>
            <person name="Scholler P."/>
            <person name="Heber S."/>
            <person name="Francs P."/>
            <person name="Bielke C."/>
            <person name="Frishman D."/>
            <person name="Haase D."/>
            <person name="Lemcke K."/>
            <person name="Mewes H.-W."/>
            <person name="Stocker S."/>
            <person name="Zaccaria P."/>
            <person name="Bevan M."/>
            <person name="Wilson R.K."/>
            <person name="de la Bastide M."/>
            <person name="Habermann K."/>
            <person name="Parnell L."/>
            <person name="Dedhia N."/>
            <person name="Gnoj L."/>
            <person name="Schutz K."/>
            <person name="Huang E."/>
            <person name="Spiegel L."/>
            <person name="Sekhon M."/>
            <person name="Murray J."/>
            <person name="Sheet P."/>
            <person name="Cordes M."/>
            <person name="Abu-Threideh J."/>
            <person name="Stoneking T."/>
            <person name="Kalicki J."/>
            <person name="Graves T."/>
            <person name="Harmon G."/>
            <person name="Edwards J."/>
            <person name="Latreille P."/>
            <person name="Courtney L."/>
            <person name="Cloud J."/>
            <person name="Abbott A."/>
            <person name="Scott K."/>
            <person name="Johnson D."/>
            <person name="Minx P."/>
            <person name="Bentley D."/>
            <person name="Fulton B."/>
            <person name="Miller N."/>
            <person name="Greco T."/>
            <person name="Kemp K."/>
            <person name="Kramer J."/>
            <person name="Fulton L."/>
            <person name="Mardis E."/>
            <person name="Dante M."/>
            <person name="Pepin K."/>
            <person name="Hillier L.W."/>
            <person name="Nelson J."/>
            <person name="Spieth J."/>
            <person name="Ryan E."/>
            <person name="Andrews S."/>
            <person name="Geisel C."/>
            <person name="Layman D."/>
            <person name="Du H."/>
            <person name="Ali J."/>
            <person name="Berghoff A."/>
            <person name="Jones K."/>
            <person name="Drone K."/>
            <person name="Cotton M."/>
            <person name="Joshu C."/>
            <person name="Antonoiu B."/>
            <person name="Zidanic M."/>
            <person name="Strong C."/>
            <person name="Sun H."/>
            <person name="Lamar B."/>
            <person name="Yordan C."/>
            <person name="Ma P."/>
            <person name="Zhong J."/>
            <person name="Preston R."/>
            <person name="Vil D."/>
            <person name="Shekher M."/>
            <person name="Matero A."/>
            <person name="Shah R."/>
            <person name="Swaby I.K."/>
            <person name="O'Shaughnessy A."/>
            <person name="Rodriguez M."/>
            <person name="Hoffman J."/>
            <person name="Till S."/>
            <person name="Granat S."/>
            <person name="Shohdy N."/>
            <person name="Hasegawa A."/>
            <person name="Hameed A."/>
            <person name="Lodhi M."/>
            <person name="Johnson A."/>
            <person name="Chen E."/>
            <person name="Marra M.A."/>
            <person name="Martienssen R."/>
            <person name="McCombie W.R."/>
        </authorList>
    </citation>
    <scope>NUCLEOTIDE SEQUENCE [LARGE SCALE GENOMIC DNA]</scope>
    <source>
        <strain>cv. Columbia</strain>
    </source>
</reference>
<reference key="4">
    <citation type="journal article" date="2017" name="Plant J.">
        <title>Araport11: a complete reannotation of the Arabidopsis thaliana reference genome.</title>
        <authorList>
            <person name="Cheng C.Y."/>
            <person name="Krishnakumar V."/>
            <person name="Chan A.P."/>
            <person name="Thibaud-Nissen F."/>
            <person name="Schobel S."/>
            <person name="Town C.D."/>
        </authorList>
    </citation>
    <scope>GENOME REANNOTATION</scope>
    <source>
        <strain>cv. Columbia</strain>
    </source>
</reference>
<reference key="5">
    <citation type="submission" date="2006-08" db="EMBL/GenBank/DDBJ databases">
        <title>Arabidopsis ORF clones.</title>
        <authorList>
            <person name="Quinitio C."/>
            <person name="Chen H."/>
            <person name="Kim C.J."/>
            <person name="Shinn P."/>
            <person name="Ecker J.R."/>
        </authorList>
    </citation>
    <scope>NUCLEOTIDE SEQUENCE [LARGE SCALE MRNA] (ISOFORM 1)</scope>
    <source>
        <strain>cv. Columbia</strain>
    </source>
</reference>
<reference key="6">
    <citation type="submission" date="2005-03" db="EMBL/GenBank/DDBJ databases">
        <title>Large-scale analysis of RIKEN Arabidopsis full-length (RAFL) cDNAs.</title>
        <authorList>
            <person name="Totoki Y."/>
            <person name="Seki M."/>
            <person name="Ishida J."/>
            <person name="Nakajima M."/>
            <person name="Enju A."/>
            <person name="Kamiya A."/>
            <person name="Narusaka M."/>
            <person name="Shin-i T."/>
            <person name="Nakagawa M."/>
            <person name="Sakamoto N."/>
            <person name="Oishi K."/>
            <person name="Kohara Y."/>
            <person name="Kobayashi M."/>
            <person name="Toyoda A."/>
            <person name="Sakaki Y."/>
            <person name="Sakurai T."/>
            <person name="Iida K."/>
            <person name="Akiyama K."/>
            <person name="Satou M."/>
            <person name="Toyoda T."/>
            <person name="Konagaya A."/>
            <person name="Carninci P."/>
            <person name="Kawai J."/>
            <person name="Hayashizaki Y."/>
            <person name="Shinozaki K."/>
        </authorList>
    </citation>
    <scope>NUCLEOTIDE SEQUENCE [LARGE SCALE MRNA] (ISOFORMS 1 AND 2)</scope>
    <source>
        <strain>cv. Columbia</strain>
    </source>
</reference>
<reference key="7">
    <citation type="journal article" date="2004" name="Mol. Plant Pathol.">
        <title>Recent advance in the study of caspase-like proteases and Bax inhibitor-1 in plants: their possible roles as regulator of programmed cell death.</title>
        <authorList>
            <person name="Watanabe N."/>
            <person name="Lam E."/>
        </authorList>
    </citation>
    <scope>GENE FAMILY</scope>
</reference>
<reference key="8">
    <citation type="journal article" date="2010" name="Science">
        <title>Arabidopsis type I metacaspases control cell death.</title>
        <authorList>
            <person name="Coll N.S."/>
            <person name="Vercammen D."/>
            <person name="Smidler A."/>
            <person name="Clover C."/>
            <person name="Van Breusegem F."/>
            <person name="Dangl J.L."/>
            <person name="Epple P."/>
        </authorList>
    </citation>
    <scope>FUNCTION</scope>
    <scope>DISRUPTION PHENOTYPE</scope>
    <scope>MUTAGENESIS OF CYS-135 AND CYS-256</scope>
</reference>
<comment type="function">
    <text evidence="3">Acts as a negative regulator of oxidative stress cell death and hypersensitive cell death response mediated by immune response. Acts via indirect or direct regulation of AMC1 at postranscriptional level.</text>
</comment>
<comment type="alternative products">
    <event type="alternative splicing"/>
    <isoform>
        <id>Q7XJE5-1</id>
        <name>1</name>
        <sequence type="displayed"/>
    </isoform>
    <isoform>
        <id>Q7XJE5-2</id>
        <name>2</name>
        <sequence type="described" ref="VSP_033690"/>
    </isoform>
</comment>
<comment type="disruption phenotype">
    <text evidence="3">No visible phenotype under normal growth conditions, but enhancement of hypersensitive cell death response upon infection with avirulent pathogen.</text>
</comment>
<comment type="miscellaneous">
    <molecule>Isoform 2</molecule>
    <text evidence="5">May be due to a competing acceptor splice site.</text>
</comment>
<comment type="similarity">
    <text evidence="5">Belongs to the peptidase C14B family.</text>
</comment>
<comment type="sequence caution" evidence="5">
    <conflict type="erroneous gene model prediction">
        <sequence resource="EMBL-CDS" id="CAB36753"/>
    </conflict>
</comment>
<comment type="sequence caution" evidence="5">
    <conflict type="erroneous gene model prediction">
        <sequence resource="EMBL-CDS" id="CAB79420"/>
    </conflict>
</comment>
<evidence type="ECO:0000250" key="1"/>
<evidence type="ECO:0000256" key="2">
    <source>
        <dbReference type="SAM" id="MobiDB-lite"/>
    </source>
</evidence>
<evidence type="ECO:0000269" key="3">
    <source>
    </source>
</evidence>
<evidence type="ECO:0000303" key="4">
    <source ref="6"/>
</evidence>
<evidence type="ECO:0000305" key="5"/>
<protein>
    <recommendedName>
        <fullName>Metacaspase-2</fullName>
        <shortName>AtMC2</shortName>
        <ecNumber>3.4.22.-</ecNumber>
    </recommendedName>
    <alternativeName>
        <fullName>Metacaspase 1c</fullName>
        <shortName>AtMCP1c</shortName>
    </alternativeName>
</protein>
<name>MCA2_ARATH</name>
<accession>Q7XJE5</accession>
<accession>Q682S4</accession>
<accession>Q9SW15</accession>
<sequence length="418" mass="45811">MLLLVDCSSCRTPLHLPPGATRIRCAICHAFTLIAPEPRLQSHASASPFPFPNSSPAPSTFIYPPPTPSPYTHAPHAPSPFNHAPPDSYPFTHAPPASSPFNHAPPGPPPPVHGQKRAVIVGVSYKNTKDELKGCINDANCMKFMLMKRFQFPESCILMLTEEEADPMRWPTKNNITMAMHWLVLSCKPGDSLVFHFSGHGNNQMDDNGDEVDGFDETLLPVDHRTSGVIVDDEINATIVRPLPYGVKLHAIVDACHSGTVMDLPYLCRMDRLGNYEWEDHRPKTGMWKGTSGGEVFSFTGCDDDQTSADTPQLSGSAWTGAMTYAFIQAIERGHGMTYGSLLNAMRSTVHEIFDKNKGRELVEVGGADFLSTLLGLLILGASPPDEEEEVNQAPQKTQEPQLSANEAFAVYEKPFSL</sequence>
<feature type="chain" id="PRO_0000334600" description="Metacaspase-2">
    <location>
        <begin position="1"/>
        <end position="418"/>
    </location>
</feature>
<feature type="region of interest" description="Disordered" evidence="2">
    <location>
        <begin position="68"/>
        <end position="113"/>
    </location>
</feature>
<feature type="region of interest" description="Disordered" evidence="2">
    <location>
        <begin position="385"/>
        <end position="406"/>
    </location>
</feature>
<feature type="compositionally biased region" description="Low complexity" evidence="2">
    <location>
        <begin position="70"/>
        <end position="80"/>
    </location>
</feature>
<feature type="compositionally biased region" description="Pro residues" evidence="2">
    <location>
        <begin position="103"/>
        <end position="112"/>
    </location>
</feature>
<feature type="compositionally biased region" description="Polar residues" evidence="2">
    <location>
        <begin position="393"/>
        <end position="405"/>
    </location>
</feature>
<feature type="active site" evidence="1">
    <location>
        <position position="200"/>
    </location>
</feature>
<feature type="active site" evidence="1">
    <location>
        <position position="256"/>
    </location>
</feature>
<feature type="splice variant" id="VSP_033690" description="In isoform 2." evidence="4">
    <location>
        <position position="164"/>
    </location>
</feature>
<feature type="mutagenesis site" description="No effect on the cell death inhibitory function." evidence="3">
    <original>C</original>
    <variation>A</variation>
    <location>
        <position position="135"/>
    </location>
</feature>
<feature type="mutagenesis site" description="No effect on the cell death inhibitory function." evidence="3">
    <original>C</original>
    <variation>A</variation>
    <location>
        <position position="256"/>
    </location>
</feature>
<proteinExistence type="evidence at protein level"/>